<accession>B5YKE5</accession>
<gene>
    <name evidence="1" type="primary">queA</name>
    <name type="ordered locus">THEYE_A0872</name>
</gene>
<dbReference type="EC" id="2.4.99.17" evidence="1"/>
<dbReference type="EMBL" id="CP001147">
    <property type="protein sequence ID" value="ACI20686.1"/>
    <property type="molecule type" value="Genomic_DNA"/>
</dbReference>
<dbReference type="RefSeq" id="WP_012545420.1">
    <property type="nucleotide sequence ID" value="NC_011296.1"/>
</dbReference>
<dbReference type="RefSeq" id="YP_002248710.1">
    <property type="nucleotide sequence ID" value="NC_011296.1"/>
</dbReference>
<dbReference type="SMR" id="B5YKE5"/>
<dbReference type="FunCoup" id="B5YKE5">
    <property type="interactions" value="392"/>
</dbReference>
<dbReference type="STRING" id="289376.THEYE_A0872"/>
<dbReference type="EnsemblBacteria" id="ACI20686">
    <property type="protein sequence ID" value="ACI20686"/>
    <property type="gene ID" value="THEYE_A0872"/>
</dbReference>
<dbReference type="KEGG" id="tye:THEYE_A0872"/>
<dbReference type="PATRIC" id="fig|289376.4.peg.859"/>
<dbReference type="eggNOG" id="COG0809">
    <property type="taxonomic scope" value="Bacteria"/>
</dbReference>
<dbReference type="HOGENOM" id="CLU_039110_1_0_0"/>
<dbReference type="InParanoid" id="B5YKE5"/>
<dbReference type="OrthoDB" id="9805933at2"/>
<dbReference type="UniPathway" id="UPA00392"/>
<dbReference type="Proteomes" id="UP000000718">
    <property type="component" value="Chromosome"/>
</dbReference>
<dbReference type="GO" id="GO:0005737">
    <property type="term" value="C:cytoplasm"/>
    <property type="evidence" value="ECO:0007669"/>
    <property type="project" value="UniProtKB-SubCell"/>
</dbReference>
<dbReference type="GO" id="GO:0051075">
    <property type="term" value="F:S-adenosylmethionine:tRNA ribosyltransferase-isomerase activity"/>
    <property type="evidence" value="ECO:0000318"/>
    <property type="project" value="GO_Central"/>
</dbReference>
<dbReference type="GO" id="GO:0008616">
    <property type="term" value="P:queuosine biosynthetic process"/>
    <property type="evidence" value="ECO:0000318"/>
    <property type="project" value="GO_Central"/>
</dbReference>
<dbReference type="GO" id="GO:0002099">
    <property type="term" value="P:tRNA wobble guanine modification"/>
    <property type="evidence" value="ECO:0000318"/>
    <property type="project" value="GO_Central"/>
</dbReference>
<dbReference type="FunFam" id="2.40.10.240:FF:000002">
    <property type="entry name" value="S-adenosylmethionine:tRNA ribosyltransferase-isomerase"/>
    <property type="match status" value="1"/>
</dbReference>
<dbReference type="FunFam" id="3.40.1780.10:FF:000001">
    <property type="entry name" value="S-adenosylmethionine:tRNA ribosyltransferase-isomerase"/>
    <property type="match status" value="1"/>
</dbReference>
<dbReference type="Gene3D" id="2.40.10.240">
    <property type="entry name" value="QueA-like"/>
    <property type="match status" value="1"/>
</dbReference>
<dbReference type="Gene3D" id="3.40.1780.10">
    <property type="entry name" value="QueA-like"/>
    <property type="match status" value="1"/>
</dbReference>
<dbReference type="HAMAP" id="MF_00113">
    <property type="entry name" value="QueA"/>
    <property type="match status" value="1"/>
</dbReference>
<dbReference type="InterPro" id="IPR003699">
    <property type="entry name" value="QueA"/>
</dbReference>
<dbReference type="InterPro" id="IPR042118">
    <property type="entry name" value="QueA_dom1"/>
</dbReference>
<dbReference type="InterPro" id="IPR042119">
    <property type="entry name" value="QueA_dom2"/>
</dbReference>
<dbReference type="InterPro" id="IPR036100">
    <property type="entry name" value="QueA_sf"/>
</dbReference>
<dbReference type="NCBIfam" id="NF001140">
    <property type="entry name" value="PRK00147.1"/>
    <property type="match status" value="1"/>
</dbReference>
<dbReference type="NCBIfam" id="TIGR00113">
    <property type="entry name" value="queA"/>
    <property type="match status" value="1"/>
</dbReference>
<dbReference type="PANTHER" id="PTHR30307">
    <property type="entry name" value="S-ADENOSYLMETHIONINE:TRNA RIBOSYLTRANSFERASE-ISOMERASE"/>
    <property type="match status" value="1"/>
</dbReference>
<dbReference type="PANTHER" id="PTHR30307:SF0">
    <property type="entry name" value="S-ADENOSYLMETHIONINE:TRNA RIBOSYLTRANSFERASE-ISOMERASE"/>
    <property type="match status" value="1"/>
</dbReference>
<dbReference type="Pfam" id="PF02547">
    <property type="entry name" value="Queuosine_synth"/>
    <property type="match status" value="1"/>
</dbReference>
<dbReference type="SUPFAM" id="SSF111337">
    <property type="entry name" value="QueA-like"/>
    <property type="match status" value="1"/>
</dbReference>
<organism>
    <name type="scientific">Thermodesulfovibrio yellowstonii (strain ATCC 51303 / DSM 11347 / YP87)</name>
    <dbReference type="NCBI Taxonomy" id="289376"/>
    <lineage>
        <taxon>Bacteria</taxon>
        <taxon>Pseudomonadati</taxon>
        <taxon>Nitrospirota</taxon>
        <taxon>Thermodesulfovibrionia</taxon>
        <taxon>Thermodesulfovibrionales</taxon>
        <taxon>Thermodesulfovibrionaceae</taxon>
        <taxon>Thermodesulfovibrio</taxon>
    </lineage>
</organism>
<comment type="function">
    <text evidence="1">Transfers and isomerizes the ribose moiety from AdoMet to the 7-aminomethyl group of 7-deazaguanine (preQ1-tRNA) to give epoxyqueuosine (oQ-tRNA).</text>
</comment>
<comment type="catalytic activity">
    <reaction evidence="1">
        <text>7-aminomethyl-7-carbaguanosine(34) in tRNA + S-adenosyl-L-methionine = epoxyqueuosine(34) in tRNA + adenine + L-methionine + 2 H(+)</text>
        <dbReference type="Rhea" id="RHEA:32155"/>
        <dbReference type="Rhea" id="RHEA-COMP:10342"/>
        <dbReference type="Rhea" id="RHEA-COMP:18582"/>
        <dbReference type="ChEBI" id="CHEBI:15378"/>
        <dbReference type="ChEBI" id="CHEBI:16708"/>
        <dbReference type="ChEBI" id="CHEBI:57844"/>
        <dbReference type="ChEBI" id="CHEBI:59789"/>
        <dbReference type="ChEBI" id="CHEBI:82833"/>
        <dbReference type="ChEBI" id="CHEBI:194443"/>
        <dbReference type="EC" id="2.4.99.17"/>
    </reaction>
</comment>
<comment type="pathway">
    <text evidence="1">tRNA modification; tRNA-queuosine biosynthesis.</text>
</comment>
<comment type="subunit">
    <text evidence="1">Monomer.</text>
</comment>
<comment type="subcellular location">
    <subcellularLocation>
        <location evidence="1">Cytoplasm</location>
    </subcellularLocation>
</comment>
<comment type="similarity">
    <text evidence="1">Belongs to the QueA family.</text>
</comment>
<proteinExistence type="inferred from homology"/>
<feature type="chain" id="PRO_1000094827" description="S-adenosylmethionine:tRNA ribosyltransferase-isomerase">
    <location>
        <begin position="1"/>
        <end position="345"/>
    </location>
</feature>
<keyword id="KW-0963">Cytoplasm</keyword>
<keyword id="KW-0671">Queuosine biosynthesis</keyword>
<keyword id="KW-1185">Reference proteome</keyword>
<keyword id="KW-0949">S-adenosyl-L-methionine</keyword>
<keyword id="KW-0808">Transferase</keyword>
<name>QUEA_THEYD</name>
<reference key="1">
    <citation type="submission" date="2008-08" db="EMBL/GenBank/DDBJ databases">
        <title>The complete genome sequence of Thermodesulfovibrio yellowstonii strain ATCC 51303 / DSM 11347 / YP87.</title>
        <authorList>
            <person name="Dodson R.J."/>
            <person name="Durkin A.S."/>
            <person name="Wu M."/>
            <person name="Eisen J."/>
            <person name="Sutton G."/>
        </authorList>
    </citation>
    <scope>NUCLEOTIDE SEQUENCE [LARGE SCALE GENOMIC DNA]</scope>
    <source>
        <strain>ATCC 51303 / DSM 11347 / YP87</strain>
    </source>
</reference>
<protein>
    <recommendedName>
        <fullName evidence="1">S-adenosylmethionine:tRNA ribosyltransferase-isomerase</fullName>
        <ecNumber evidence="1">2.4.99.17</ecNumber>
    </recommendedName>
    <alternativeName>
        <fullName evidence="1">Queuosine biosynthesis protein QueA</fullName>
    </alternativeName>
</protein>
<sequence>MKITELNYTLPTDLIAQKPLSERDKSRLLVLHKNTGEIEHRIFYEIVEYLNEGDILIINNTKVIPARLIAEKPSGGKIEILLIKEKKCSSQNVVWEVMTKGSYEGEVFIDEFIAELRNNCDGRYIVFKNMTSPKVRNLINEKGFMPLPPYIKRKPIQSDRQDYQTVYAKMNGSIAAPTAGLHFTKELLETIISKGVKLREITLHVGVGTFKPIKVDKLQEHKMDPEYFEIDKTLIEEIYAIKKAGKRIFSVGTTTTRALEGYASGKYEDRGSDNYKIKGSTDIFIYPEFSFKIVDALITNFHLPKSTPLAMVYAFCEMQKVKKAYREAIEKGYRFFSYGDAMLII</sequence>
<evidence type="ECO:0000255" key="1">
    <source>
        <dbReference type="HAMAP-Rule" id="MF_00113"/>
    </source>
</evidence>